<evidence type="ECO:0000250" key="1"/>
<evidence type="ECO:0000250" key="2">
    <source>
        <dbReference type="UniProtKB" id="P00157"/>
    </source>
</evidence>
<evidence type="ECO:0000255" key="3">
    <source>
        <dbReference type="PROSITE-ProRule" id="PRU00967"/>
    </source>
</evidence>
<evidence type="ECO:0000255" key="4">
    <source>
        <dbReference type="PROSITE-ProRule" id="PRU00968"/>
    </source>
</evidence>
<dbReference type="EMBL" id="AF076089">
    <property type="protein sequence ID" value="AAC68646.1"/>
    <property type="molecule type" value="Genomic_DNA"/>
</dbReference>
<dbReference type="SMR" id="O79227"/>
<dbReference type="GO" id="GO:0005743">
    <property type="term" value="C:mitochondrial inner membrane"/>
    <property type="evidence" value="ECO:0007669"/>
    <property type="project" value="UniProtKB-SubCell"/>
</dbReference>
<dbReference type="GO" id="GO:0045275">
    <property type="term" value="C:respiratory chain complex III"/>
    <property type="evidence" value="ECO:0007669"/>
    <property type="project" value="InterPro"/>
</dbReference>
<dbReference type="GO" id="GO:0046872">
    <property type="term" value="F:metal ion binding"/>
    <property type="evidence" value="ECO:0007669"/>
    <property type="project" value="UniProtKB-KW"/>
</dbReference>
<dbReference type="GO" id="GO:0008121">
    <property type="term" value="F:ubiquinol-cytochrome-c reductase activity"/>
    <property type="evidence" value="ECO:0007669"/>
    <property type="project" value="InterPro"/>
</dbReference>
<dbReference type="GO" id="GO:0006122">
    <property type="term" value="P:mitochondrial electron transport, ubiquinol to cytochrome c"/>
    <property type="evidence" value="ECO:0007669"/>
    <property type="project" value="TreeGrafter"/>
</dbReference>
<dbReference type="CDD" id="cd00290">
    <property type="entry name" value="cytochrome_b_C"/>
    <property type="match status" value="1"/>
</dbReference>
<dbReference type="CDD" id="cd00284">
    <property type="entry name" value="Cytochrome_b_N"/>
    <property type="match status" value="1"/>
</dbReference>
<dbReference type="FunFam" id="1.20.810.10:FF:000002">
    <property type="entry name" value="Cytochrome b"/>
    <property type="match status" value="1"/>
</dbReference>
<dbReference type="Gene3D" id="1.20.810.10">
    <property type="entry name" value="Cytochrome Bc1 Complex, Chain C"/>
    <property type="match status" value="1"/>
</dbReference>
<dbReference type="InterPro" id="IPR005798">
    <property type="entry name" value="Cyt_b/b6_C"/>
</dbReference>
<dbReference type="InterPro" id="IPR036150">
    <property type="entry name" value="Cyt_b/b6_C_sf"/>
</dbReference>
<dbReference type="InterPro" id="IPR005797">
    <property type="entry name" value="Cyt_b/b6_N"/>
</dbReference>
<dbReference type="InterPro" id="IPR027387">
    <property type="entry name" value="Cytb/b6-like_sf"/>
</dbReference>
<dbReference type="InterPro" id="IPR030689">
    <property type="entry name" value="Cytochrome_b"/>
</dbReference>
<dbReference type="InterPro" id="IPR048260">
    <property type="entry name" value="Cytochrome_b_C_euk/bac"/>
</dbReference>
<dbReference type="InterPro" id="IPR048259">
    <property type="entry name" value="Cytochrome_b_N_euk/bac"/>
</dbReference>
<dbReference type="InterPro" id="IPR016174">
    <property type="entry name" value="Di-haem_cyt_TM"/>
</dbReference>
<dbReference type="PANTHER" id="PTHR19271">
    <property type="entry name" value="CYTOCHROME B"/>
    <property type="match status" value="1"/>
</dbReference>
<dbReference type="PANTHER" id="PTHR19271:SF16">
    <property type="entry name" value="CYTOCHROME B"/>
    <property type="match status" value="1"/>
</dbReference>
<dbReference type="Pfam" id="PF00032">
    <property type="entry name" value="Cytochrom_B_C"/>
    <property type="match status" value="1"/>
</dbReference>
<dbReference type="Pfam" id="PF00033">
    <property type="entry name" value="Cytochrome_B"/>
    <property type="match status" value="1"/>
</dbReference>
<dbReference type="PIRSF" id="PIRSF038885">
    <property type="entry name" value="COB"/>
    <property type="match status" value="1"/>
</dbReference>
<dbReference type="SUPFAM" id="SSF81648">
    <property type="entry name" value="a domain/subunit of cytochrome bc1 complex (Ubiquinol-cytochrome c reductase)"/>
    <property type="match status" value="1"/>
</dbReference>
<dbReference type="SUPFAM" id="SSF81342">
    <property type="entry name" value="Transmembrane di-heme cytochromes"/>
    <property type="match status" value="1"/>
</dbReference>
<dbReference type="PROSITE" id="PS51003">
    <property type="entry name" value="CYTB_CTER"/>
    <property type="match status" value="1"/>
</dbReference>
<dbReference type="PROSITE" id="PS51002">
    <property type="entry name" value="CYTB_NTER"/>
    <property type="match status" value="1"/>
</dbReference>
<accession>O79227</accession>
<name>CYB_PYGAN</name>
<gene>
    <name type="primary">MT-CYB</name>
    <name type="synonym">COB</name>
    <name type="synonym">CYTB</name>
    <name type="synonym">MTCYB</name>
</gene>
<organism>
    <name type="scientific">Pygoscelis antarcticus</name>
    <name type="common">Chinstrap penguin</name>
    <dbReference type="NCBI Taxonomy" id="79643"/>
    <lineage>
        <taxon>Eukaryota</taxon>
        <taxon>Metazoa</taxon>
        <taxon>Chordata</taxon>
        <taxon>Craniata</taxon>
        <taxon>Vertebrata</taxon>
        <taxon>Euteleostomi</taxon>
        <taxon>Archelosauria</taxon>
        <taxon>Archosauria</taxon>
        <taxon>Dinosauria</taxon>
        <taxon>Saurischia</taxon>
        <taxon>Theropoda</taxon>
        <taxon>Coelurosauria</taxon>
        <taxon>Aves</taxon>
        <taxon>Neognathae</taxon>
        <taxon>Neoaves</taxon>
        <taxon>Aequornithes</taxon>
        <taxon>Sphenisciformes</taxon>
        <taxon>Spheniscidae</taxon>
        <taxon>Pygoscelis</taxon>
    </lineage>
</organism>
<feature type="chain" id="PRO_0000061474" description="Cytochrome b">
    <location>
        <begin position="1"/>
        <end position="380"/>
    </location>
</feature>
<feature type="transmembrane region" description="Helical" evidence="2">
    <location>
        <begin position="34"/>
        <end position="54"/>
    </location>
</feature>
<feature type="transmembrane region" description="Helical" evidence="2">
    <location>
        <begin position="78"/>
        <end position="99"/>
    </location>
</feature>
<feature type="transmembrane region" description="Helical" evidence="2">
    <location>
        <begin position="114"/>
        <end position="134"/>
    </location>
</feature>
<feature type="transmembrane region" description="Helical" evidence="2">
    <location>
        <begin position="179"/>
        <end position="199"/>
    </location>
</feature>
<feature type="transmembrane region" description="Helical" evidence="2">
    <location>
        <begin position="227"/>
        <end position="247"/>
    </location>
</feature>
<feature type="transmembrane region" description="Helical" evidence="2">
    <location>
        <begin position="289"/>
        <end position="309"/>
    </location>
</feature>
<feature type="transmembrane region" description="Helical" evidence="2">
    <location>
        <begin position="321"/>
        <end position="341"/>
    </location>
</feature>
<feature type="transmembrane region" description="Helical" evidence="2">
    <location>
        <begin position="348"/>
        <end position="368"/>
    </location>
</feature>
<feature type="binding site" description="axial binding residue" evidence="2">
    <location>
        <position position="84"/>
    </location>
    <ligand>
        <name>heme b</name>
        <dbReference type="ChEBI" id="CHEBI:60344"/>
        <label>b562</label>
    </ligand>
    <ligandPart>
        <name>Fe</name>
        <dbReference type="ChEBI" id="CHEBI:18248"/>
    </ligandPart>
</feature>
<feature type="binding site" description="axial binding residue" evidence="2">
    <location>
        <position position="98"/>
    </location>
    <ligand>
        <name>heme b</name>
        <dbReference type="ChEBI" id="CHEBI:60344"/>
        <label>b566</label>
    </ligand>
    <ligandPart>
        <name>Fe</name>
        <dbReference type="ChEBI" id="CHEBI:18248"/>
    </ligandPart>
</feature>
<feature type="binding site" description="axial binding residue" evidence="2">
    <location>
        <position position="183"/>
    </location>
    <ligand>
        <name>heme b</name>
        <dbReference type="ChEBI" id="CHEBI:60344"/>
        <label>b562</label>
    </ligand>
    <ligandPart>
        <name>Fe</name>
        <dbReference type="ChEBI" id="CHEBI:18248"/>
    </ligandPart>
</feature>
<feature type="binding site" description="axial binding residue" evidence="2">
    <location>
        <position position="197"/>
    </location>
    <ligand>
        <name>heme b</name>
        <dbReference type="ChEBI" id="CHEBI:60344"/>
        <label>b566</label>
    </ligand>
    <ligandPart>
        <name>Fe</name>
        <dbReference type="ChEBI" id="CHEBI:18248"/>
    </ligandPart>
</feature>
<feature type="binding site" evidence="2">
    <location>
        <position position="202"/>
    </location>
    <ligand>
        <name>a ubiquinone</name>
        <dbReference type="ChEBI" id="CHEBI:16389"/>
    </ligand>
</feature>
<reference key="1">
    <citation type="journal article" date="1998" name="Mol. Biol. Evol.">
        <title>Body size effects and rates of cytochrome-b evolution in tube-nosed seabirds.</title>
        <authorList>
            <person name="Nunn G.B."/>
            <person name="Stanley S.E."/>
        </authorList>
    </citation>
    <scope>NUCLEOTIDE SEQUENCE [GENOMIC DNA]</scope>
    <source>
        <strain>Isolate Pygoant-1</strain>
    </source>
</reference>
<protein>
    <recommendedName>
        <fullName>Cytochrome b</fullName>
    </recommendedName>
    <alternativeName>
        <fullName>Complex III subunit 3</fullName>
    </alternativeName>
    <alternativeName>
        <fullName>Complex III subunit III</fullName>
    </alternativeName>
    <alternativeName>
        <fullName>Cytochrome b-c1 complex subunit 3</fullName>
    </alternativeName>
    <alternativeName>
        <fullName>Ubiquinol-cytochrome-c reductase complex cytochrome b subunit</fullName>
    </alternativeName>
</protein>
<keyword id="KW-0249">Electron transport</keyword>
<keyword id="KW-0349">Heme</keyword>
<keyword id="KW-0408">Iron</keyword>
<keyword id="KW-0472">Membrane</keyword>
<keyword id="KW-0479">Metal-binding</keyword>
<keyword id="KW-0496">Mitochondrion</keyword>
<keyword id="KW-0999">Mitochondrion inner membrane</keyword>
<keyword id="KW-0679">Respiratory chain</keyword>
<keyword id="KW-0812">Transmembrane</keyword>
<keyword id="KW-1133">Transmembrane helix</keyword>
<keyword id="KW-0813">Transport</keyword>
<keyword id="KW-0830">Ubiquinone</keyword>
<geneLocation type="mitochondrion"/>
<sequence length="380" mass="42405">MAPNLRKSHPLLKMINNSLIDLPTPSNISAWWNFGSLLGICLTTQILTGLLLAMHYTADTTLAFSSIAHTCRDVQYGWLIRNMHANGASLLFICIYLHIGRGVYDGSYLHKETWNTGVILLLTLMATAFVGYVLPWGQMSFWGATVITNLFSAIPYIGQTIVEWAWGGFSVDNPTLTRFFALHFLLPFMITGLTLIHLTFLHESGSNNPLGIVANSDKIPFHPYYSTKDILGFTLMLLPLTTLALFSPNLLGDPENFTPANPLVTPPHIKPEWYFLFAYAILRSIPNKLGGVLALAASVLVLFLSPLLHKSKQRTMAFRPLSQLLFWTLVANLLILTWIGSQPVEHPFIIIGQLASTTYFIILLILFPITSALENKMLNF</sequence>
<proteinExistence type="inferred from homology"/>
<comment type="function">
    <text evidence="2">Component of the ubiquinol-cytochrome c reductase complex (complex III or cytochrome b-c1 complex) that is part of the mitochondrial respiratory chain. The b-c1 complex mediates electron transfer from ubiquinol to cytochrome c. Contributes to the generation of a proton gradient across the mitochondrial membrane that is then used for ATP synthesis.</text>
</comment>
<comment type="cofactor">
    <cofactor evidence="2">
        <name>heme b</name>
        <dbReference type="ChEBI" id="CHEBI:60344"/>
    </cofactor>
    <text evidence="2">Binds 2 heme b groups non-covalently.</text>
</comment>
<comment type="subunit">
    <text evidence="2">The cytochrome bc1 complex contains 11 subunits: 3 respiratory subunits (MT-CYB, CYC1 and UQCRFS1), 2 core proteins (UQCRC1 and UQCRC2) and 6 low-molecular weight proteins (UQCRH/QCR6, UQCRB/QCR7, UQCRQ/QCR8, UQCR10/QCR9, UQCR11/QCR10 and a cleavage product of UQCRFS1). This cytochrome bc1 complex then forms a dimer.</text>
</comment>
<comment type="subcellular location">
    <subcellularLocation>
        <location evidence="2">Mitochondrion inner membrane</location>
        <topology evidence="2">Multi-pass membrane protein</topology>
    </subcellularLocation>
</comment>
<comment type="miscellaneous">
    <text evidence="1">Heme 1 (or BL or b562) is low-potential and absorbs at about 562 nm, and heme 2 (or BH or b566) is high-potential and absorbs at about 566 nm.</text>
</comment>
<comment type="similarity">
    <text evidence="3 4">Belongs to the cytochrome b family.</text>
</comment>
<comment type="caution">
    <text evidence="2">The full-length protein contains only eight transmembrane helices, not nine as predicted by bioinformatics tools.</text>
</comment>